<protein>
    <recommendedName>
        <fullName>Serine protease inhibitor Kazal-type 14</fullName>
    </recommendedName>
</protein>
<comment type="function">
    <text>May be a serine protease inhibitor.</text>
</comment>
<comment type="subcellular location">
    <subcellularLocation>
        <location evidence="3">Secreted</location>
    </subcellularLocation>
</comment>
<accession>Q6IE46</accession>
<keyword id="KW-1015">Disulfide bond</keyword>
<keyword id="KW-0325">Glycoprotein</keyword>
<keyword id="KW-0378">Hydrolase</keyword>
<keyword id="KW-0646">Protease inhibitor</keyword>
<keyword id="KW-1185">Reference proteome</keyword>
<keyword id="KW-0964">Secreted</keyword>
<keyword id="KW-0722">Serine protease inhibitor</keyword>
<keyword id="KW-0732">Signal</keyword>
<name>ISK14_RAT</name>
<organism>
    <name type="scientific">Rattus norvegicus</name>
    <name type="common">Rat</name>
    <dbReference type="NCBI Taxonomy" id="10116"/>
    <lineage>
        <taxon>Eukaryota</taxon>
        <taxon>Metazoa</taxon>
        <taxon>Chordata</taxon>
        <taxon>Craniata</taxon>
        <taxon>Vertebrata</taxon>
        <taxon>Euteleostomi</taxon>
        <taxon>Mammalia</taxon>
        <taxon>Eutheria</taxon>
        <taxon>Euarchontoglires</taxon>
        <taxon>Glires</taxon>
        <taxon>Rodentia</taxon>
        <taxon>Myomorpha</taxon>
        <taxon>Muroidea</taxon>
        <taxon>Muridae</taxon>
        <taxon>Murinae</taxon>
        <taxon>Rattus</taxon>
    </lineage>
</organism>
<evidence type="ECO:0000255" key="1"/>
<evidence type="ECO:0000255" key="2">
    <source>
        <dbReference type="PROSITE-ProRule" id="PRU00798"/>
    </source>
</evidence>
<evidence type="ECO:0000305" key="3"/>
<reference key="1">
    <citation type="journal article" date="2004" name="Nature">
        <title>Genome sequence of the Brown Norway rat yields insights into mammalian evolution.</title>
        <authorList>
            <person name="Gibbs R.A."/>
            <person name="Weinstock G.M."/>
            <person name="Metzker M.L."/>
            <person name="Muzny D.M."/>
            <person name="Sodergren E.J."/>
            <person name="Scherer S."/>
            <person name="Scott G."/>
            <person name="Steffen D."/>
            <person name="Worley K.C."/>
            <person name="Burch P.E."/>
            <person name="Okwuonu G."/>
            <person name="Hines S."/>
            <person name="Lewis L."/>
            <person name="Deramo C."/>
            <person name="Delgado O."/>
            <person name="Dugan-Rocha S."/>
            <person name="Miner G."/>
            <person name="Morgan M."/>
            <person name="Hawes A."/>
            <person name="Gill R."/>
            <person name="Holt R.A."/>
            <person name="Adams M.D."/>
            <person name="Amanatides P.G."/>
            <person name="Baden-Tillson H."/>
            <person name="Barnstead M."/>
            <person name="Chin S."/>
            <person name="Evans C.A."/>
            <person name="Ferriera S."/>
            <person name="Fosler C."/>
            <person name="Glodek A."/>
            <person name="Gu Z."/>
            <person name="Jennings D."/>
            <person name="Kraft C.L."/>
            <person name="Nguyen T."/>
            <person name="Pfannkoch C.M."/>
            <person name="Sitter C."/>
            <person name="Sutton G.G."/>
            <person name="Venter J.C."/>
            <person name="Woodage T."/>
            <person name="Smith D."/>
            <person name="Lee H.-M."/>
            <person name="Gustafson E."/>
            <person name="Cahill P."/>
            <person name="Kana A."/>
            <person name="Doucette-Stamm L."/>
            <person name="Weinstock K."/>
            <person name="Fechtel K."/>
            <person name="Weiss R.B."/>
            <person name="Dunn D.M."/>
            <person name="Green E.D."/>
            <person name="Blakesley R.W."/>
            <person name="Bouffard G.G."/>
            <person name="De Jong P.J."/>
            <person name="Osoegawa K."/>
            <person name="Zhu B."/>
            <person name="Marra M."/>
            <person name="Schein J."/>
            <person name="Bosdet I."/>
            <person name="Fjell C."/>
            <person name="Jones S."/>
            <person name="Krzywinski M."/>
            <person name="Mathewson C."/>
            <person name="Siddiqui A."/>
            <person name="Wye N."/>
            <person name="McPherson J."/>
            <person name="Zhao S."/>
            <person name="Fraser C.M."/>
            <person name="Shetty J."/>
            <person name="Shatsman S."/>
            <person name="Geer K."/>
            <person name="Chen Y."/>
            <person name="Abramzon S."/>
            <person name="Nierman W.C."/>
            <person name="Havlak P.H."/>
            <person name="Chen R."/>
            <person name="Durbin K.J."/>
            <person name="Egan A."/>
            <person name="Ren Y."/>
            <person name="Song X.-Z."/>
            <person name="Li B."/>
            <person name="Liu Y."/>
            <person name="Qin X."/>
            <person name="Cawley S."/>
            <person name="Cooney A.J."/>
            <person name="D'Souza L.M."/>
            <person name="Martin K."/>
            <person name="Wu J.Q."/>
            <person name="Gonzalez-Garay M.L."/>
            <person name="Jackson A.R."/>
            <person name="Kalafus K.J."/>
            <person name="McLeod M.P."/>
            <person name="Milosavljevic A."/>
            <person name="Virk D."/>
            <person name="Volkov A."/>
            <person name="Wheeler D.A."/>
            <person name="Zhang Z."/>
            <person name="Bailey J.A."/>
            <person name="Eichler E.E."/>
            <person name="Tuzun E."/>
            <person name="Birney E."/>
            <person name="Mongin E."/>
            <person name="Ureta-Vidal A."/>
            <person name="Woodwark C."/>
            <person name="Zdobnov E."/>
            <person name="Bork P."/>
            <person name="Suyama M."/>
            <person name="Torrents D."/>
            <person name="Alexandersson M."/>
            <person name="Trask B.J."/>
            <person name="Young J.M."/>
            <person name="Huang H."/>
            <person name="Wang H."/>
            <person name="Xing H."/>
            <person name="Daniels S."/>
            <person name="Gietzen D."/>
            <person name="Schmidt J."/>
            <person name="Stevens K."/>
            <person name="Vitt U."/>
            <person name="Wingrove J."/>
            <person name="Camara F."/>
            <person name="Mar Alba M."/>
            <person name="Abril J.F."/>
            <person name="Guigo R."/>
            <person name="Smit A."/>
            <person name="Dubchak I."/>
            <person name="Rubin E.M."/>
            <person name="Couronne O."/>
            <person name="Poliakov A."/>
            <person name="Huebner N."/>
            <person name="Ganten D."/>
            <person name="Goesele C."/>
            <person name="Hummel O."/>
            <person name="Kreitler T."/>
            <person name="Lee Y.-A."/>
            <person name="Monti J."/>
            <person name="Schulz H."/>
            <person name="Zimdahl H."/>
            <person name="Himmelbauer H."/>
            <person name="Lehrach H."/>
            <person name="Jacob H.J."/>
            <person name="Bromberg S."/>
            <person name="Gullings-Handley J."/>
            <person name="Jensen-Seaman M.I."/>
            <person name="Kwitek A.E."/>
            <person name="Lazar J."/>
            <person name="Pasko D."/>
            <person name="Tonellato P.J."/>
            <person name="Twigger S."/>
            <person name="Ponting C.P."/>
            <person name="Duarte J.M."/>
            <person name="Rice S."/>
            <person name="Goodstadt L."/>
            <person name="Beatson S.A."/>
            <person name="Emes R.D."/>
            <person name="Winter E.E."/>
            <person name="Webber C."/>
            <person name="Brandt P."/>
            <person name="Nyakatura G."/>
            <person name="Adetobi M."/>
            <person name="Chiaromonte F."/>
            <person name="Elnitski L."/>
            <person name="Eswara P."/>
            <person name="Hardison R.C."/>
            <person name="Hou M."/>
            <person name="Kolbe D."/>
            <person name="Makova K."/>
            <person name="Miller W."/>
            <person name="Nekrutenko A."/>
            <person name="Riemer C."/>
            <person name="Schwartz S."/>
            <person name="Taylor J."/>
            <person name="Yang S."/>
            <person name="Zhang Y."/>
            <person name="Lindpaintner K."/>
            <person name="Andrews T.D."/>
            <person name="Caccamo M."/>
            <person name="Clamp M."/>
            <person name="Clarke L."/>
            <person name="Curwen V."/>
            <person name="Durbin R.M."/>
            <person name="Eyras E."/>
            <person name="Searle S.M."/>
            <person name="Cooper G.M."/>
            <person name="Batzoglou S."/>
            <person name="Brudno M."/>
            <person name="Sidow A."/>
            <person name="Stone E.A."/>
            <person name="Payseur B.A."/>
            <person name="Bourque G."/>
            <person name="Lopez-Otin C."/>
            <person name="Puente X.S."/>
            <person name="Chakrabarti K."/>
            <person name="Chatterji S."/>
            <person name="Dewey C."/>
            <person name="Pachter L."/>
            <person name="Bray N."/>
            <person name="Yap V.B."/>
            <person name="Caspi A."/>
            <person name="Tesler G."/>
            <person name="Pevzner P.A."/>
            <person name="Haussler D."/>
            <person name="Roskin K.M."/>
            <person name="Baertsch R."/>
            <person name="Clawson H."/>
            <person name="Furey T.S."/>
            <person name="Hinrichs A.S."/>
            <person name="Karolchik D."/>
            <person name="Kent W.J."/>
            <person name="Rosenbloom K.R."/>
            <person name="Trumbower H."/>
            <person name="Weirauch M."/>
            <person name="Cooper D.N."/>
            <person name="Stenson P.D."/>
            <person name="Ma B."/>
            <person name="Brent M."/>
            <person name="Arumugam M."/>
            <person name="Shteynberg D."/>
            <person name="Copley R.R."/>
            <person name="Taylor M.S."/>
            <person name="Riethman H."/>
            <person name="Mudunuri U."/>
            <person name="Peterson J."/>
            <person name="Guyer M."/>
            <person name="Felsenfeld A."/>
            <person name="Old S."/>
            <person name="Mockrin S."/>
            <person name="Collins F.S."/>
        </authorList>
    </citation>
    <scope>NUCLEOTIDE SEQUENCE [LARGE SCALE GENOMIC DNA]</scope>
    <source>
        <strain>Brown Norway</strain>
    </source>
</reference>
<reference key="2">
    <citation type="journal article" date="2004" name="Genome Res.">
        <title>A genomic analysis of rat proteases and protease inhibitors.</title>
        <authorList>
            <person name="Puente X.S."/>
            <person name="Lopez-Otin C."/>
        </authorList>
    </citation>
    <scope>IDENTIFICATION</scope>
    <source>
        <strain>Sprague-Dawley</strain>
    </source>
</reference>
<dbReference type="EMBL" id="AABR03109508">
    <property type="status" value="NOT_ANNOTATED_CDS"/>
    <property type="molecule type" value="Genomic_DNA"/>
</dbReference>
<dbReference type="EMBL" id="BN000347">
    <property type="protein sequence ID" value="CAE51399.1"/>
    <property type="molecule type" value="mRNA"/>
</dbReference>
<dbReference type="RefSeq" id="NP_001008875.1">
    <property type="nucleotide sequence ID" value="NM_001008875.1"/>
</dbReference>
<dbReference type="SMR" id="Q6IE46"/>
<dbReference type="FunCoup" id="Q6IE46">
    <property type="interactions" value="1"/>
</dbReference>
<dbReference type="STRING" id="10116.ENSRNOP00000041361"/>
<dbReference type="MEROPS" id="I01.975"/>
<dbReference type="GlyCosmos" id="Q6IE46">
    <property type="glycosylation" value="1 site, No reported glycans"/>
</dbReference>
<dbReference type="GlyGen" id="Q6IE46">
    <property type="glycosylation" value="1 site"/>
</dbReference>
<dbReference type="PaxDb" id="10116-ENSRNOP00000041361"/>
<dbReference type="Ensembl" id="ENSRNOT00000048335.3">
    <property type="protein sequence ID" value="ENSRNOP00000041361.2"/>
    <property type="gene ID" value="ENSRNOG00000028902.3"/>
</dbReference>
<dbReference type="UCSC" id="RGD:1303288">
    <property type="organism name" value="rat"/>
</dbReference>
<dbReference type="AGR" id="RGD:1303288"/>
<dbReference type="RGD" id="1303288">
    <property type="gene designation" value="Spink14"/>
</dbReference>
<dbReference type="eggNOG" id="KOG3649">
    <property type="taxonomic scope" value="Eukaryota"/>
</dbReference>
<dbReference type="GeneTree" id="ENSGT00940000162856"/>
<dbReference type="HOGENOM" id="CLU_183157_0_0_1"/>
<dbReference type="InParanoid" id="Q6IE46"/>
<dbReference type="OMA" id="GRIKFYH"/>
<dbReference type="OrthoDB" id="126772at2759"/>
<dbReference type="PhylomeDB" id="Q6IE46"/>
<dbReference type="PRO" id="PR:Q6IE46"/>
<dbReference type="Proteomes" id="UP000002494">
    <property type="component" value="Chromosome 18"/>
</dbReference>
<dbReference type="GO" id="GO:0005576">
    <property type="term" value="C:extracellular region"/>
    <property type="evidence" value="ECO:0007669"/>
    <property type="project" value="UniProtKB-SubCell"/>
</dbReference>
<dbReference type="GO" id="GO:0016787">
    <property type="term" value="F:hydrolase activity"/>
    <property type="evidence" value="ECO:0007669"/>
    <property type="project" value="UniProtKB-KW"/>
</dbReference>
<dbReference type="GO" id="GO:0004867">
    <property type="term" value="F:serine-type endopeptidase inhibitor activity"/>
    <property type="evidence" value="ECO:0007669"/>
    <property type="project" value="UniProtKB-KW"/>
</dbReference>
<dbReference type="CDD" id="cd01327">
    <property type="entry name" value="KAZAL_PSTI"/>
    <property type="match status" value="1"/>
</dbReference>
<dbReference type="Gene3D" id="3.30.60.30">
    <property type="match status" value="1"/>
</dbReference>
<dbReference type="InterPro" id="IPR050159">
    <property type="entry name" value="Kazal-type_SerProtInhib"/>
</dbReference>
<dbReference type="InterPro" id="IPR002350">
    <property type="entry name" value="Kazal_dom"/>
</dbReference>
<dbReference type="InterPro" id="IPR036058">
    <property type="entry name" value="Kazal_dom_sf"/>
</dbReference>
<dbReference type="PANTHER" id="PTHR47499:SF3">
    <property type="entry name" value="SERINE PROTEASE INHIBITOR KAZAL-TYPE 14"/>
    <property type="match status" value="1"/>
</dbReference>
<dbReference type="PANTHER" id="PTHR47499">
    <property type="entry name" value="SERINE PROTEASE INHIBITOR KAZAL-TYPE 7 SPINK7"/>
    <property type="match status" value="1"/>
</dbReference>
<dbReference type="Pfam" id="PF00050">
    <property type="entry name" value="Kazal_1"/>
    <property type="match status" value="1"/>
</dbReference>
<dbReference type="SMART" id="SM00280">
    <property type="entry name" value="KAZAL"/>
    <property type="match status" value="1"/>
</dbReference>
<dbReference type="SUPFAM" id="SSF100895">
    <property type="entry name" value="Kazal-type serine protease inhibitors"/>
    <property type="match status" value="1"/>
</dbReference>
<dbReference type="PROSITE" id="PS00282">
    <property type="entry name" value="KAZAL_1"/>
    <property type="match status" value="1"/>
</dbReference>
<dbReference type="PROSITE" id="PS51465">
    <property type="entry name" value="KAZAL_2"/>
    <property type="match status" value="1"/>
</dbReference>
<proteinExistence type="inferred from homology"/>
<gene>
    <name type="primary">Spink14</name>
    <name type="synonym">Spink5l2</name>
</gene>
<feature type="signal peptide" evidence="1">
    <location>
        <begin position="1"/>
        <end position="23"/>
    </location>
</feature>
<feature type="chain" id="PRO_5000095991" description="Serine protease inhibitor Kazal-type 14">
    <location>
        <begin position="24"/>
        <end position="98"/>
    </location>
</feature>
<feature type="domain" description="Kazal-like" evidence="2">
    <location>
        <begin position="35"/>
        <end position="98"/>
    </location>
</feature>
<feature type="site" description="Reactive bond" evidence="2">
    <location>
        <begin position="60"/>
        <end position="61"/>
    </location>
</feature>
<feature type="glycosylation site" description="N-linked (GlcNAc...) asparagine" evidence="1">
    <location>
        <position position="52"/>
    </location>
</feature>
<feature type="disulfide bond" evidence="2">
    <location>
        <begin position="41"/>
        <end position="80"/>
    </location>
</feature>
<feature type="disulfide bond" evidence="2">
    <location>
        <begin position="58"/>
        <end position="77"/>
    </location>
</feature>
<feature type="disulfide bond" evidence="2">
    <location>
        <begin position="66"/>
        <end position="98"/>
    </location>
</feature>
<sequence length="98" mass="11237">MVKYFQVLWSLLFSIMLHSMLLAAPGARVWWPTHGLIKIKCPYKKVKLSWFNKTVDPCPGLKQPICGTNFVTYDNPCILCVESLKSGGQIRYYHTGRC</sequence>